<accession>Q1PEZ8</accession>
<accession>Q8S8P1</accession>
<proteinExistence type="evidence at transcript level"/>
<reference key="1">
    <citation type="journal article" date="1999" name="Nature">
        <title>Sequence and analysis of chromosome 2 of the plant Arabidopsis thaliana.</title>
        <authorList>
            <person name="Lin X."/>
            <person name="Kaul S."/>
            <person name="Rounsley S.D."/>
            <person name="Shea T.P."/>
            <person name="Benito M.-I."/>
            <person name="Town C.D."/>
            <person name="Fujii C.Y."/>
            <person name="Mason T.M."/>
            <person name="Bowman C.L."/>
            <person name="Barnstead M.E."/>
            <person name="Feldblyum T.V."/>
            <person name="Buell C.R."/>
            <person name="Ketchum K.A."/>
            <person name="Lee J.J."/>
            <person name="Ronning C.M."/>
            <person name="Koo H.L."/>
            <person name="Moffat K.S."/>
            <person name="Cronin L.A."/>
            <person name="Shen M."/>
            <person name="Pai G."/>
            <person name="Van Aken S."/>
            <person name="Umayam L."/>
            <person name="Tallon L.J."/>
            <person name="Gill J.E."/>
            <person name="Adams M.D."/>
            <person name="Carrera A.J."/>
            <person name="Creasy T.H."/>
            <person name="Goodman H.M."/>
            <person name="Somerville C.R."/>
            <person name="Copenhaver G.P."/>
            <person name="Preuss D."/>
            <person name="Nierman W.C."/>
            <person name="White O."/>
            <person name="Eisen J.A."/>
            <person name="Salzberg S.L."/>
            <person name="Fraser C.M."/>
            <person name="Venter J.C."/>
        </authorList>
    </citation>
    <scope>NUCLEOTIDE SEQUENCE [LARGE SCALE GENOMIC DNA]</scope>
    <source>
        <strain>cv. Columbia</strain>
    </source>
</reference>
<reference key="2">
    <citation type="journal article" date="2017" name="Plant J.">
        <title>Araport11: a complete reannotation of the Arabidopsis thaliana reference genome.</title>
        <authorList>
            <person name="Cheng C.Y."/>
            <person name="Krishnakumar V."/>
            <person name="Chan A.P."/>
            <person name="Thibaud-Nissen F."/>
            <person name="Schobel S."/>
            <person name="Town C.D."/>
        </authorList>
    </citation>
    <scope>GENOME REANNOTATION</scope>
    <source>
        <strain>cv. Columbia</strain>
    </source>
</reference>
<reference key="3">
    <citation type="journal article" date="2006" name="Plant Biotechnol. J.">
        <title>Simultaneous high-throughput recombinational cloning of open reading frames in closed and open configurations.</title>
        <authorList>
            <person name="Underwood B.A."/>
            <person name="Vanderhaeghen R."/>
            <person name="Whitford R."/>
            <person name="Town C.D."/>
            <person name="Hilson P."/>
        </authorList>
    </citation>
    <scope>NUCLEOTIDE SEQUENCE [LARGE SCALE MRNA]</scope>
    <source>
        <strain>cv. Columbia</strain>
    </source>
</reference>
<sequence length="331" mass="37952">MEKPEWSELPGDLINLTANRFSSISDVLRVRSICKPWRSAAATPKSFQCNLPSSNKMIETVLSPTTFFRVTGPSSCSYKGWLIRTKQVSESSKINLLSPFFRQLLTPSQQTLDLLKFEVSEIRQSYEIHIFDKYLIQGVIGKEGPSHILSRVVFLDNLIFAVGQDDKIWCCKSGEESSRIWTKIKNQVEDFLDIILHKGQVYALDLTGAIWWISLSPLSLLQFTPSIPMDYDGYDSCNKRLVEYCGDLCIIHQLRLKKAYIRRSQRTVGFKVYKMDEYVAKWVEVRSLGDKALIVARDSCFTVVASEYHGCLNNSIYFVDNVRKSVIRMKL</sequence>
<dbReference type="EMBL" id="AC004747">
    <property type="protein sequence ID" value="AAM15003.1"/>
    <property type="status" value="ALT_SEQ"/>
    <property type="molecule type" value="Genomic_DNA"/>
</dbReference>
<dbReference type="EMBL" id="CP002685">
    <property type="protein sequence ID" value="AEC07802.1"/>
    <property type="molecule type" value="Genomic_DNA"/>
</dbReference>
<dbReference type="EMBL" id="DQ446568">
    <property type="protein sequence ID" value="ABE65864.1"/>
    <property type="molecule type" value="mRNA"/>
</dbReference>
<dbReference type="PIR" id="T02608">
    <property type="entry name" value="T02608"/>
</dbReference>
<dbReference type="RefSeq" id="NP_180185.2">
    <property type="nucleotide sequence ID" value="NM_128174.2"/>
</dbReference>
<dbReference type="PaxDb" id="3702-AT2G26160.1"/>
<dbReference type="EnsemblPlants" id="AT2G26160.1">
    <property type="protein sequence ID" value="AT2G26160.1"/>
    <property type="gene ID" value="AT2G26160"/>
</dbReference>
<dbReference type="GeneID" id="817156"/>
<dbReference type="Gramene" id="AT2G26160.1">
    <property type="protein sequence ID" value="AT2G26160.1"/>
    <property type="gene ID" value="AT2G26160"/>
</dbReference>
<dbReference type="KEGG" id="ath:AT2G26160"/>
<dbReference type="Araport" id="AT2G26160"/>
<dbReference type="TAIR" id="AT2G26160">
    <property type="gene designation" value="ATFDA16"/>
</dbReference>
<dbReference type="eggNOG" id="ENOG502QW71">
    <property type="taxonomic scope" value="Eukaryota"/>
</dbReference>
<dbReference type="HOGENOM" id="CLU_019286_1_0_1"/>
<dbReference type="InParanoid" id="Q1PEZ8"/>
<dbReference type="OMA" id="CQPPIVT"/>
<dbReference type="PhylomeDB" id="Q1PEZ8"/>
<dbReference type="PRO" id="PR:Q1PEZ8"/>
<dbReference type="Proteomes" id="UP000006548">
    <property type="component" value="Chromosome 2"/>
</dbReference>
<dbReference type="ExpressionAtlas" id="Q1PEZ8">
    <property type="expression patterns" value="baseline and differential"/>
</dbReference>
<dbReference type="InterPro" id="IPR005174">
    <property type="entry name" value="KIB1-4_b-propeller"/>
</dbReference>
<dbReference type="InterPro" id="IPR051304">
    <property type="entry name" value="SCF_F-box_domain"/>
</dbReference>
<dbReference type="PANTHER" id="PTHR47123:SF25">
    <property type="entry name" value="F-BOX PROTEIN"/>
    <property type="match status" value="1"/>
</dbReference>
<dbReference type="PANTHER" id="PTHR47123">
    <property type="entry name" value="F-BOX PROTEIN SKIP23"/>
    <property type="match status" value="1"/>
</dbReference>
<dbReference type="Pfam" id="PF03478">
    <property type="entry name" value="Beta-prop_KIB1-4"/>
    <property type="match status" value="1"/>
</dbReference>
<evidence type="ECO:0000305" key="1"/>
<feature type="chain" id="PRO_0000283388" description="F-box protein At2g26160">
    <location>
        <begin position="1"/>
        <end position="331"/>
    </location>
</feature>
<feature type="domain" description="F-box">
    <location>
        <begin position="4"/>
        <end position="52"/>
    </location>
</feature>
<gene>
    <name type="ordered locus">At2g26160</name>
    <name type="ORF">T19L18.3</name>
</gene>
<protein>
    <recommendedName>
        <fullName>F-box protein At2g26160</fullName>
    </recommendedName>
</protein>
<name>FB117_ARATH</name>
<comment type="sequence caution" evidence="1">
    <conflict type="erroneous gene model prediction">
        <sequence resource="EMBL-CDS" id="AAM15003"/>
    </conflict>
</comment>
<keyword id="KW-1185">Reference proteome</keyword>
<organism>
    <name type="scientific">Arabidopsis thaliana</name>
    <name type="common">Mouse-ear cress</name>
    <dbReference type="NCBI Taxonomy" id="3702"/>
    <lineage>
        <taxon>Eukaryota</taxon>
        <taxon>Viridiplantae</taxon>
        <taxon>Streptophyta</taxon>
        <taxon>Embryophyta</taxon>
        <taxon>Tracheophyta</taxon>
        <taxon>Spermatophyta</taxon>
        <taxon>Magnoliopsida</taxon>
        <taxon>eudicotyledons</taxon>
        <taxon>Gunneridae</taxon>
        <taxon>Pentapetalae</taxon>
        <taxon>rosids</taxon>
        <taxon>malvids</taxon>
        <taxon>Brassicales</taxon>
        <taxon>Brassicaceae</taxon>
        <taxon>Camelineae</taxon>
        <taxon>Arabidopsis</taxon>
    </lineage>
</organism>